<accession>B8D7B4</accession>
<organism>
    <name type="scientific">Buchnera aphidicola subsp. Acyrthosiphon pisum (strain Tuc7)</name>
    <dbReference type="NCBI Taxonomy" id="561501"/>
    <lineage>
        <taxon>Bacteria</taxon>
        <taxon>Pseudomonadati</taxon>
        <taxon>Pseudomonadota</taxon>
        <taxon>Gammaproteobacteria</taxon>
        <taxon>Enterobacterales</taxon>
        <taxon>Erwiniaceae</taxon>
        <taxon>Buchnera</taxon>
    </lineage>
</organism>
<protein>
    <recommendedName>
        <fullName evidence="1">5'-methylthioadenosine/S-adenosylhomocysteine nucleosidase</fullName>
        <shortName evidence="1">MTA/SAH nucleosidase</shortName>
        <shortName evidence="1">MTAN</shortName>
        <ecNumber evidence="1">3.2.2.9</ecNumber>
    </recommendedName>
    <alternativeName>
        <fullName evidence="1">5'-deoxyadenosine nucleosidase</fullName>
        <shortName evidence="1">DOA nucleosidase</shortName>
        <shortName evidence="1">dAdo nucleosidase</shortName>
    </alternativeName>
    <alternativeName>
        <fullName evidence="1">5'-methylthioadenosine nucleosidase</fullName>
        <shortName evidence="1">MTA nucleosidase</shortName>
    </alternativeName>
    <alternativeName>
        <fullName evidence="1">S-adenosylhomocysteine nucleosidase</fullName>
        <shortName evidence="1">AdoHcy nucleosidase</shortName>
        <shortName evidence="1">SAH nucleosidase</shortName>
        <shortName evidence="1">SRH nucleosidase</shortName>
    </alternativeName>
</protein>
<name>MTNN_BUCAT</name>
<evidence type="ECO:0000255" key="1">
    <source>
        <dbReference type="HAMAP-Rule" id="MF_01684"/>
    </source>
</evidence>
<feature type="chain" id="PRO_1000187415" description="5'-methylthioadenosine/S-adenosylhomocysteine nucleosidase">
    <location>
        <begin position="1"/>
        <end position="232"/>
    </location>
</feature>
<feature type="active site" description="Proton acceptor" evidence="1">
    <location>
        <position position="12"/>
    </location>
</feature>
<feature type="active site" description="Proton donor" evidence="1">
    <location>
        <position position="197"/>
    </location>
</feature>
<feature type="binding site" evidence="1">
    <location>
        <position position="78"/>
    </location>
    <ligand>
        <name>substrate</name>
    </ligand>
</feature>
<feature type="binding site" evidence="1">
    <location>
        <position position="152"/>
    </location>
    <ligand>
        <name>substrate</name>
    </ligand>
</feature>
<feature type="binding site" evidence="1">
    <location>
        <begin position="173"/>
        <end position="174"/>
    </location>
    <ligand>
        <name>substrate</name>
    </ligand>
</feature>
<reference key="1">
    <citation type="journal article" date="2009" name="Science">
        <title>The dynamics and time scale of ongoing genomic erosion in symbiotic bacteria.</title>
        <authorList>
            <person name="Moran N.A."/>
            <person name="McLaughlin H.J."/>
            <person name="Sorek R."/>
        </authorList>
    </citation>
    <scope>NUCLEOTIDE SEQUENCE [LARGE SCALE GENOMIC DNA]</scope>
    <source>
        <strain>Tuc7</strain>
    </source>
</reference>
<keyword id="KW-0028">Amino-acid biosynthesis</keyword>
<keyword id="KW-0378">Hydrolase</keyword>
<keyword id="KW-0486">Methionine biosynthesis</keyword>
<comment type="function">
    <text evidence="1">Catalyzes the irreversible cleavage of the glycosidic bond in both 5'-methylthioadenosine (MTA) and S-adenosylhomocysteine (SAH/AdoHcy) to adenine and the corresponding thioribose, 5'-methylthioribose and S-ribosylhomocysteine, respectively. Also cleaves 5'-deoxyadenosine, a toxic by-product of radical S-adenosylmethionine (SAM) enzymes, into 5-deoxyribose and adenine. Thus, is required for in vivo function of the radical SAM enzymes biotin synthase and lipoic acid synthase, that are inhibited by 5'-deoxyadenosine accumulation.</text>
</comment>
<comment type="catalytic activity">
    <reaction evidence="1">
        <text>S-adenosyl-L-homocysteine + H2O = S-(5-deoxy-D-ribos-5-yl)-L-homocysteine + adenine</text>
        <dbReference type="Rhea" id="RHEA:17805"/>
        <dbReference type="ChEBI" id="CHEBI:15377"/>
        <dbReference type="ChEBI" id="CHEBI:16708"/>
        <dbReference type="ChEBI" id="CHEBI:57856"/>
        <dbReference type="ChEBI" id="CHEBI:58195"/>
        <dbReference type="EC" id="3.2.2.9"/>
    </reaction>
</comment>
<comment type="catalytic activity">
    <reaction evidence="1">
        <text>S-methyl-5'-thioadenosine + H2O = 5-(methylsulfanyl)-D-ribose + adenine</text>
        <dbReference type="Rhea" id="RHEA:13617"/>
        <dbReference type="ChEBI" id="CHEBI:15377"/>
        <dbReference type="ChEBI" id="CHEBI:16708"/>
        <dbReference type="ChEBI" id="CHEBI:17509"/>
        <dbReference type="ChEBI" id="CHEBI:78440"/>
        <dbReference type="EC" id="3.2.2.9"/>
    </reaction>
</comment>
<comment type="catalytic activity">
    <reaction evidence="1">
        <text>5'-deoxyadenosine + H2O = 5-deoxy-D-ribose + adenine</text>
        <dbReference type="Rhea" id="RHEA:29859"/>
        <dbReference type="ChEBI" id="CHEBI:15377"/>
        <dbReference type="ChEBI" id="CHEBI:16708"/>
        <dbReference type="ChEBI" id="CHEBI:17319"/>
        <dbReference type="ChEBI" id="CHEBI:149540"/>
        <dbReference type="EC" id="3.2.2.9"/>
    </reaction>
    <physiologicalReaction direction="left-to-right" evidence="1">
        <dbReference type="Rhea" id="RHEA:29860"/>
    </physiologicalReaction>
</comment>
<comment type="pathway">
    <text evidence="1">Amino-acid biosynthesis; L-methionine biosynthesis via salvage pathway; S-methyl-5-thio-alpha-D-ribose 1-phosphate from S-methyl-5'-thioadenosine (hydrolase route): step 1/2.</text>
</comment>
<comment type="subunit">
    <text evidence="1">Homodimer.</text>
</comment>
<comment type="similarity">
    <text evidence="1">Belongs to the PNP/UDP phosphorylase family. MtnN subfamily.</text>
</comment>
<gene>
    <name evidence="1" type="primary">mtnN</name>
    <name type="ordered locus">BUAPTUC7_209</name>
</gene>
<sequence length="232" mass="26266">MKIGIIGAINQETERLKKIIHFYIEKKINTYKIYIGKFKSHDVFLIKSGIGKVSASIATMILIDLYKPDTIINSGSAGSLQSFLKIGDIIIPKKTCYYDVDLTNFGYTRGQIPGYPKEFTVNEKICNFFKKNADKYQLKYIKGLILSGDTFVRENESIKILKKQFPSAIAVEMESSAIAQVCYKFNIPLIIIKSISDASDNNATVNFKENIDIVSYQLSKFVKIILENLIDM</sequence>
<proteinExistence type="inferred from homology"/>
<dbReference type="EC" id="3.2.2.9" evidence="1"/>
<dbReference type="EMBL" id="CP001158">
    <property type="protein sequence ID" value="ACL30029.1"/>
    <property type="molecule type" value="Genomic_DNA"/>
</dbReference>
<dbReference type="RefSeq" id="WP_009874168.1">
    <property type="nucleotide sequence ID" value="NC_011834.1"/>
</dbReference>
<dbReference type="SMR" id="B8D7B4"/>
<dbReference type="KEGG" id="bau:BUAPTUC7_209"/>
<dbReference type="HOGENOM" id="CLU_031248_2_2_6"/>
<dbReference type="UniPathway" id="UPA00904">
    <property type="reaction ID" value="UER00871"/>
</dbReference>
<dbReference type="GO" id="GO:0005829">
    <property type="term" value="C:cytosol"/>
    <property type="evidence" value="ECO:0007669"/>
    <property type="project" value="TreeGrafter"/>
</dbReference>
<dbReference type="GO" id="GO:0008782">
    <property type="term" value="F:adenosylhomocysteine nucleosidase activity"/>
    <property type="evidence" value="ECO:0007669"/>
    <property type="project" value="UniProtKB-UniRule"/>
</dbReference>
<dbReference type="GO" id="GO:0008930">
    <property type="term" value="F:methylthioadenosine nucleosidase activity"/>
    <property type="evidence" value="ECO:0007669"/>
    <property type="project" value="UniProtKB-UniRule"/>
</dbReference>
<dbReference type="GO" id="GO:0019509">
    <property type="term" value="P:L-methionine salvage from methylthioadenosine"/>
    <property type="evidence" value="ECO:0007669"/>
    <property type="project" value="UniProtKB-UniRule"/>
</dbReference>
<dbReference type="GO" id="GO:0019284">
    <property type="term" value="P:L-methionine salvage from S-adenosylmethionine"/>
    <property type="evidence" value="ECO:0007669"/>
    <property type="project" value="TreeGrafter"/>
</dbReference>
<dbReference type="GO" id="GO:0046124">
    <property type="term" value="P:purine deoxyribonucleoside catabolic process"/>
    <property type="evidence" value="ECO:0007669"/>
    <property type="project" value="UniProtKB-UniRule"/>
</dbReference>
<dbReference type="CDD" id="cd09008">
    <property type="entry name" value="MTAN"/>
    <property type="match status" value="1"/>
</dbReference>
<dbReference type="Gene3D" id="3.40.50.1580">
    <property type="entry name" value="Nucleoside phosphorylase domain"/>
    <property type="match status" value="1"/>
</dbReference>
<dbReference type="HAMAP" id="MF_01684">
    <property type="entry name" value="Salvage_MtnN"/>
    <property type="match status" value="1"/>
</dbReference>
<dbReference type="InterPro" id="IPR010049">
    <property type="entry name" value="MTA_SAH_Nsdase"/>
</dbReference>
<dbReference type="InterPro" id="IPR000845">
    <property type="entry name" value="Nucleoside_phosphorylase_d"/>
</dbReference>
<dbReference type="InterPro" id="IPR035994">
    <property type="entry name" value="Nucleoside_phosphorylase_sf"/>
</dbReference>
<dbReference type="NCBIfam" id="TIGR01704">
    <property type="entry name" value="MTA_SAH-Nsdase"/>
    <property type="match status" value="1"/>
</dbReference>
<dbReference type="NCBIfam" id="NF004079">
    <property type="entry name" value="PRK05584.1"/>
    <property type="match status" value="1"/>
</dbReference>
<dbReference type="PANTHER" id="PTHR46832">
    <property type="entry name" value="5'-METHYLTHIOADENOSINE/S-ADENOSYLHOMOCYSTEINE NUCLEOSIDASE"/>
    <property type="match status" value="1"/>
</dbReference>
<dbReference type="PANTHER" id="PTHR46832:SF1">
    <property type="entry name" value="5'-METHYLTHIOADENOSINE_S-ADENOSYLHOMOCYSTEINE NUCLEOSIDASE"/>
    <property type="match status" value="1"/>
</dbReference>
<dbReference type="Pfam" id="PF01048">
    <property type="entry name" value="PNP_UDP_1"/>
    <property type="match status" value="1"/>
</dbReference>
<dbReference type="SUPFAM" id="SSF53167">
    <property type="entry name" value="Purine and uridine phosphorylases"/>
    <property type="match status" value="1"/>
</dbReference>